<feature type="chain" id="PRO_0000106444" description="Response regulator aspartate phosphatase J">
    <location>
        <begin position="1"/>
        <end position="373"/>
    </location>
</feature>
<feature type="repeat" description="TPR 1" evidence="1">
    <location>
        <begin position="99"/>
        <end position="135"/>
    </location>
</feature>
<feature type="repeat" description="TPR 2" evidence="1">
    <location>
        <begin position="146"/>
        <end position="179"/>
    </location>
</feature>
<feature type="repeat" description="TPR 3" evidence="1">
    <location>
        <begin position="220"/>
        <end position="253"/>
    </location>
</feature>
<feature type="repeat" description="TPR 4" evidence="1">
    <location>
        <begin position="259"/>
        <end position="292"/>
    </location>
</feature>
<feature type="repeat" description="TPR 5" evidence="1">
    <location>
        <begin position="334"/>
        <end position="367"/>
    </location>
</feature>
<feature type="binding site" evidence="3 6">
    <location>
        <position position="147"/>
    </location>
    <ligand>
        <name>L-glutamyl-L-arginyl-glycyl-L-methionyl-L-threonine</name>
        <dbReference type="ChEBI" id="CHEBI:191852"/>
        <note>allosteric inhibitor</note>
    </ligand>
</feature>
<feature type="binding site" evidence="3 6">
    <location>
        <position position="150"/>
    </location>
    <ligand>
        <name>L-glutamyl-L-arginyl-glycyl-L-methionyl-L-threonine</name>
        <dbReference type="ChEBI" id="CHEBI:191852"/>
        <note>allosteric inhibitor</note>
    </ligand>
</feature>
<feature type="binding site" evidence="3 6">
    <location>
        <position position="181"/>
    </location>
    <ligand>
        <name>L-glutamyl-L-arginyl-glycyl-L-methionyl-L-threonine</name>
        <dbReference type="ChEBI" id="CHEBI:191852"/>
        <note>allosteric inhibitor</note>
    </ligand>
</feature>
<feature type="binding site" evidence="3 6">
    <location>
        <position position="192"/>
    </location>
    <ligand>
        <name>L-glutamyl-L-arginyl-glycyl-L-methionyl-L-threonine</name>
        <dbReference type="ChEBI" id="CHEBI:191852"/>
        <note>allosteric inhibitor</note>
    </ligand>
</feature>
<feature type="binding site" evidence="3 6">
    <location>
        <position position="217"/>
    </location>
    <ligand>
        <name>L-glutamyl-L-arginyl-glycyl-L-methionyl-L-threonine</name>
        <dbReference type="ChEBI" id="CHEBI:191852"/>
        <note>allosteric inhibitor</note>
    </ligand>
</feature>
<feature type="binding site" evidence="3 6">
    <location>
        <position position="225"/>
    </location>
    <ligand>
        <name>L-glutamyl-L-arginyl-glycyl-L-methionyl-L-threonine</name>
        <dbReference type="ChEBI" id="CHEBI:191852"/>
        <note>allosteric inhibitor</note>
    </ligand>
</feature>
<feature type="binding site" evidence="3 6">
    <location>
        <position position="228"/>
    </location>
    <ligand>
        <name>L-glutamyl-L-arginyl-glycyl-L-methionyl-L-threonine</name>
        <dbReference type="ChEBI" id="CHEBI:191852"/>
        <note>allosteric inhibitor</note>
    </ligand>
</feature>
<feature type="binding site" evidence="3 6">
    <location>
        <position position="260"/>
    </location>
    <ligand>
        <name>L-glutamyl-L-arginyl-glycyl-L-methionyl-L-threonine</name>
        <dbReference type="ChEBI" id="CHEBI:191852"/>
        <note>allosteric inhibitor</note>
    </ligand>
</feature>
<feature type="binding site" evidence="3 6">
    <location>
        <position position="297"/>
    </location>
    <ligand>
        <name>L-glutamyl-L-arginyl-glycyl-L-methionyl-L-threonine</name>
        <dbReference type="ChEBI" id="CHEBI:191852"/>
        <note>allosteric inhibitor</note>
    </ligand>
</feature>
<feature type="binding site" evidence="3 6">
    <location>
        <position position="300"/>
    </location>
    <ligand>
        <name>L-glutamyl-L-arginyl-glycyl-L-methionyl-L-threonine</name>
        <dbReference type="ChEBI" id="CHEBI:191852"/>
        <note>allosteric inhibitor</note>
    </ligand>
</feature>
<feature type="binding site" evidence="3 6">
    <location>
        <position position="335"/>
    </location>
    <ligand>
        <name>L-glutamyl-L-arginyl-glycyl-L-methionyl-L-threonine</name>
        <dbReference type="ChEBI" id="CHEBI:191852"/>
        <note>allosteric inhibitor</note>
    </ligand>
</feature>
<feature type="mutagenesis site" description="Displays a severe phosphatase defect." evidence="3">
    <original>E</original>
    <variation>A</variation>
    <location>
        <position position="87"/>
    </location>
</feature>
<feature type="mutagenesis site" description="Shows wild-type phosphatase activity but is insensitive to PhrC inhibition." evidence="3">
    <original>R</original>
    <variation>A</variation>
    <location>
        <position position="105"/>
    </location>
</feature>
<feature type="mutagenesis site" description="Insensitive to PhrC inhibition." evidence="3">
    <original>E</original>
    <variation>A</variation>
    <location>
        <position position="147"/>
    </location>
</feature>
<feature type="mutagenesis site" description="Insensitive to PhrC inhibition." evidence="3">
    <original>Y</original>
    <variation>F</variation>
    <location>
        <position position="150"/>
    </location>
</feature>
<feature type="mutagenesis site" description="Shows wild-type phosphatase activity and sensitivity to PhrC inhibition." evidence="3">
    <original>Y</original>
    <variation>F</variation>
    <location>
        <position position="161"/>
    </location>
</feature>
<feature type="mutagenesis site" description="Insensitive to PhrC inhibition." evidence="3">
    <original>D</original>
    <variation>A</variation>
    <location>
        <position position="192"/>
    </location>
</feature>
<feature type="mutagenesis site" description="Insensitive to PhrC inhibition." evidence="3">
    <original>N</original>
    <variation>A</variation>
    <location>
        <position position="225"/>
    </location>
</feature>
<feature type="mutagenesis site" description="Insensitive to PhrC inhibition." evidence="3">
    <original>F</original>
    <variation>A</variation>
    <location>
        <position position="250"/>
    </location>
</feature>
<feature type="mutagenesis site" description="Insensitive to PhrC inhibition." evidence="3">
    <original>K</original>
    <variation>E</variation>
    <location>
        <position position="300"/>
    </location>
</feature>
<feature type="helix" evidence="7">
    <location>
        <begin position="7"/>
        <end position="22"/>
    </location>
</feature>
<feature type="helix" evidence="7">
    <location>
        <begin position="26"/>
        <end position="40"/>
    </location>
</feature>
<feature type="helix" evidence="7">
    <location>
        <begin position="47"/>
        <end position="67"/>
    </location>
</feature>
<feature type="helix" evidence="7">
    <location>
        <begin position="79"/>
        <end position="87"/>
    </location>
</feature>
<feature type="helix" evidence="7">
    <location>
        <begin position="96"/>
        <end position="111"/>
    </location>
</feature>
<feature type="helix" evidence="7">
    <location>
        <begin position="115"/>
        <end position="126"/>
    </location>
</feature>
<feature type="helix" evidence="7">
    <location>
        <begin position="127"/>
        <end position="131"/>
    </location>
</feature>
<feature type="helix" evidence="7">
    <location>
        <begin position="135"/>
        <end position="151"/>
    </location>
</feature>
<feature type="helix" evidence="7">
    <location>
        <begin position="155"/>
        <end position="171"/>
    </location>
</feature>
<feature type="helix" evidence="7">
    <location>
        <begin position="177"/>
        <end position="192"/>
    </location>
</feature>
<feature type="helix" evidence="7">
    <location>
        <begin position="196"/>
        <end position="213"/>
    </location>
</feature>
<feature type="helix" evidence="7">
    <location>
        <begin position="216"/>
        <end position="233"/>
    </location>
</feature>
<feature type="helix" evidence="7">
    <location>
        <begin position="236"/>
        <end position="252"/>
    </location>
</feature>
<feature type="helix" evidence="7">
    <location>
        <begin position="257"/>
        <end position="272"/>
    </location>
</feature>
<feature type="helix" evidence="7">
    <location>
        <begin position="275"/>
        <end position="291"/>
    </location>
</feature>
<feature type="helix" evidence="7">
    <location>
        <begin position="295"/>
        <end position="308"/>
    </location>
</feature>
<feature type="helix" evidence="7">
    <location>
        <begin position="314"/>
        <end position="326"/>
    </location>
</feature>
<feature type="helix" evidence="7">
    <location>
        <begin position="330"/>
        <end position="346"/>
    </location>
</feature>
<feature type="helix" evidence="7">
    <location>
        <begin position="350"/>
        <end position="369"/>
    </location>
</feature>
<gene>
    <name type="primary">rapJ</name>
    <name type="synonym">ycdE</name>
    <name type="ordered locus">BSU02820</name>
</gene>
<dbReference type="EC" id="3.1.3.-" evidence="2 3"/>
<dbReference type="EMBL" id="AB000617">
    <property type="protein sequence ID" value="BAA22243.1"/>
    <property type="molecule type" value="Genomic_DNA"/>
</dbReference>
<dbReference type="EMBL" id="AL009126">
    <property type="protein sequence ID" value="CAB12076.1"/>
    <property type="molecule type" value="Genomic_DNA"/>
</dbReference>
<dbReference type="PIR" id="E69689">
    <property type="entry name" value="E69689"/>
</dbReference>
<dbReference type="RefSeq" id="NP_388164.1">
    <property type="nucleotide sequence ID" value="NC_000964.3"/>
</dbReference>
<dbReference type="RefSeq" id="WP_003246478.1">
    <property type="nucleotide sequence ID" value="NZ_OZ025638.1"/>
</dbReference>
<dbReference type="PDB" id="4GYO">
    <property type="method" value="X-ray"/>
    <property type="resolution" value="2.16 A"/>
    <property type="chains" value="A/B=1-373"/>
</dbReference>
<dbReference type="PDBsum" id="4GYO"/>
<dbReference type="SMR" id="O34327"/>
<dbReference type="DIP" id="DIP-58967N"/>
<dbReference type="FunCoup" id="O34327">
    <property type="interactions" value="54"/>
</dbReference>
<dbReference type="IntAct" id="O34327">
    <property type="interactions" value="5"/>
</dbReference>
<dbReference type="STRING" id="224308.BSU02820"/>
<dbReference type="PaxDb" id="224308-BSU02820"/>
<dbReference type="EnsemblBacteria" id="CAB12076">
    <property type="protein sequence ID" value="CAB12076"/>
    <property type="gene ID" value="BSU_02820"/>
</dbReference>
<dbReference type="GeneID" id="938373"/>
<dbReference type="KEGG" id="bsu:BSU02820"/>
<dbReference type="PATRIC" id="fig|224308.179.peg.293"/>
<dbReference type="eggNOG" id="COG0457">
    <property type="taxonomic scope" value="Bacteria"/>
</dbReference>
<dbReference type="InParanoid" id="O34327"/>
<dbReference type="OrthoDB" id="2957368at2"/>
<dbReference type="PhylomeDB" id="O34327"/>
<dbReference type="BioCyc" id="BSUB:BSU02820-MONOMER"/>
<dbReference type="EvolutionaryTrace" id="O34327"/>
<dbReference type="Proteomes" id="UP000001570">
    <property type="component" value="Chromosome"/>
</dbReference>
<dbReference type="GO" id="GO:0005737">
    <property type="term" value="C:cytoplasm"/>
    <property type="evidence" value="ECO:0007669"/>
    <property type="project" value="UniProtKB-SubCell"/>
</dbReference>
<dbReference type="GO" id="GO:0004721">
    <property type="term" value="F:phosphoprotein phosphatase activity"/>
    <property type="evidence" value="ECO:0007669"/>
    <property type="project" value="UniProtKB-KW"/>
</dbReference>
<dbReference type="GO" id="GO:0030435">
    <property type="term" value="P:sporulation resulting in formation of a cellular spore"/>
    <property type="evidence" value="ECO:0007669"/>
    <property type="project" value="UniProtKB-KW"/>
</dbReference>
<dbReference type="Gene3D" id="1.25.40.10">
    <property type="entry name" value="Tetratricopeptide repeat domain"/>
    <property type="match status" value="2"/>
</dbReference>
<dbReference type="InterPro" id="IPR051476">
    <property type="entry name" value="Bac_ResReg_Asp_Phosphatase"/>
</dbReference>
<dbReference type="InterPro" id="IPR011990">
    <property type="entry name" value="TPR-like_helical_dom_sf"/>
</dbReference>
<dbReference type="InterPro" id="IPR019734">
    <property type="entry name" value="TPR_rpt"/>
</dbReference>
<dbReference type="PANTHER" id="PTHR46630">
    <property type="entry name" value="TETRATRICOPEPTIDE REPEAT PROTEIN 29"/>
    <property type="match status" value="1"/>
</dbReference>
<dbReference type="PANTHER" id="PTHR46630:SF1">
    <property type="entry name" value="TETRATRICOPEPTIDE REPEAT PROTEIN 29"/>
    <property type="match status" value="1"/>
</dbReference>
<dbReference type="Pfam" id="PF18801">
    <property type="entry name" value="RapH_N"/>
    <property type="match status" value="1"/>
</dbReference>
<dbReference type="SMART" id="SM00028">
    <property type="entry name" value="TPR"/>
    <property type="match status" value="4"/>
</dbReference>
<dbReference type="SUPFAM" id="SSF48452">
    <property type="entry name" value="TPR-like"/>
    <property type="match status" value="1"/>
</dbReference>
<dbReference type="PROSITE" id="PS50005">
    <property type="entry name" value="TPR"/>
    <property type="match status" value="4"/>
</dbReference>
<dbReference type="PROSITE" id="PS50293">
    <property type="entry name" value="TPR_REGION"/>
    <property type="match status" value="1"/>
</dbReference>
<evidence type="ECO:0000255" key="1"/>
<evidence type="ECO:0000269" key="2">
    <source>
    </source>
</evidence>
<evidence type="ECO:0000269" key="3">
    <source>
    </source>
</evidence>
<evidence type="ECO:0000305" key="4"/>
<evidence type="ECO:0000305" key="5">
    <source>
    </source>
</evidence>
<evidence type="ECO:0007744" key="6">
    <source>
        <dbReference type="PDB" id="4GYO"/>
    </source>
</evidence>
<evidence type="ECO:0007829" key="7">
    <source>
        <dbReference type="PDB" id="4GYO"/>
    </source>
</evidence>
<organism>
    <name type="scientific">Bacillus subtilis (strain 168)</name>
    <dbReference type="NCBI Taxonomy" id="224308"/>
    <lineage>
        <taxon>Bacteria</taxon>
        <taxon>Bacillati</taxon>
        <taxon>Bacillota</taxon>
        <taxon>Bacilli</taxon>
        <taxon>Bacillales</taxon>
        <taxon>Bacillaceae</taxon>
        <taxon>Bacillus</taxon>
    </lineage>
</organism>
<sequence>MRAKIPSEEVAVKLNEWYKLIRAFEADQAEALKQEIEYDLEDMEENQDLLLYFSLMEFRHRIMLDKLMPVKDSDTKPPFSDMLNEIESNQQKLTGLLEYYFYYFRGMYEFKQKNFILAIDHYKHAEEKLEYVEDEIEKAEFLFKVAEVYYHIKQTYFSMNYASQALDIYTKYELYGRRRVQCEFIIAGNLTDVYHHEKALTHLCSALEHARQLEEAYMIAAAYYNVGHCKYSLGDYKEAEGYFKTAAAIFEEHNFQQAVQAVFSLTHIYCKEGKYDKAVEAYDRGIKSAAEWEDDMYLTKFRLIHELYLGSGDLNVLTECFDLLESRQLLADAEDLLHDTAERFNQLEHYESAAFFYRRLMNIKKKLAEQRFQ</sequence>
<comment type="function">
    <text evidence="2 3 5">Involved in the regulation of sporulation (Probable). Acts as a phosphatase that specifically dephosphorylates the sporulation initiation phosphotransferase Spo0F and inhibits its activity (PubMed:21346797, PubMed:23526881).</text>
</comment>
<comment type="activity regulation">
    <text evidence="3">Inhibited in vitro by the competence and sporulation stimulating factor (CSF), encoded by phrC (PubMed:23526881). However, CSF has at least three targets (RapB, RapC, and RapJ) and the physiological importance of RapJ inhibition by CSF is unknown (PubMed:23526881). Interaction with CSF induces a conformational change in RapJ (PubMed:23526881).</text>
</comment>
<comment type="subunit">
    <text evidence="2 3">Monomer in solution (PubMed:23526881). Homodimer (PubMed:21346797).</text>
</comment>
<comment type="interaction">
    <interactant intactId="EBI-5246213">
        <id>O34327</id>
    </interactant>
    <interactant intactId="EBI-16042798">
        <id>P94416</id>
        <label>phrC</label>
    </interactant>
    <organismsDiffer>false</organismsDiffer>
    <experiments>4</experiments>
</comment>
<comment type="interaction">
    <interactant intactId="EBI-5246213">
        <id>O34327</id>
    </interactant>
    <interactant intactId="EBI-6418009">
        <id>P06628</id>
        <label>spo0F</label>
    </interactant>
    <organismsDiffer>false</organismsDiffer>
    <experiments>2</experiments>
</comment>
<comment type="subcellular location">
    <subcellularLocation>
        <location evidence="4">Cytoplasm</location>
    </subcellularLocation>
</comment>
<comment type="domain">
    <text evidence="3">Contains a small N-terminal 3-helix bundle domain and a large C-terminal TPR domain, connected by a linker region.</text>
</comment>
<comment type="similarity">
    <text evidence="4">Belongs to the Rap family.</text>
</comment>
<proteinExistence type="evidence at protein level"/>
<reference key="1">
    <citation type="journal article" date="1997" name="Microbiology">
        <title>A 32 kb nucleotide sequence from the region of the lincomycin-resistance gene (22 degrees-25 degrees) of the Bacillus subtilis chromosome and identification of the site of the lin-2 mutation.</title>
        <authorList>
            <person name="Kumano M."/>
            <person name="Tamakoshi A."/>
            <person name="Yamane K."/>
        </authorList>
    </citation>
    <scope>NUCLEOTIDE SEQUENCE [GENOMIC DNA]</scope>
    <source>
        <strain>168</strain>
    </source>
</reference>
<reference key="2">
    <citation type="journal article" date="1997" name="Nature">
        <title>The complete genome sequence of the Gram-positive bacterium Bacillus subtilis.</title>
        <authorList>
            <person name="Kunst F."/>
            <person name="Ogasawara N."/>
            <person name="Moszer I."/>
            <person name="Albertini A.M."/>
            <person name="Alloni G."/>
            <person name="Azevedo V."/>
            <person name="Bertero M.G."/>
            <person name="Bessieres P."/>
            <person name="Bolotin A."/>
            <person name="Borchert S."/>
            <person name="Borriss R."/>
            <person name="Boursier L."/>
            <person name="Brans A."/>
            <person name="Braun M."/>
            <person name="Brignell S.C."/>
            <person name="Bron S."/>
            <person name="Brouillet S."/>
            <person name="Bruschi C.V."/>
            <person name="Caldwell B."/>
            <person name="Capuano V."/>
            <person name="Carter N.M."/>
            <person name="Choi S.-K."/>
            <person name="Codani J.-J."/>
            <person name="Connerton I.F."/>
            <person name="Cummings N.J."/>
            <person name="Daniel R.A."/>
            <person name="Denizot F."/>
            <person name="Devine K.M."/>
            <person name="Duesterhoeft A."/>
            <person name="Ehrlich S.D."/>
            <person name="Emmerson P.T."/>
            <person name="Entian K.-D."/>
            <person name="Errington J."/>
            <person name="Fabret C."/>
            <person name="Ferrari E."/>
            <person name="Foulger D."/>
            <person name="Fritz C."/>
            <person name="Fujita M."/>
            <person name="Fujita Y."/>
            <person name="Fuma S."/>
            <person name="Galizzi A."/>
            <person name="Galleron N."/>
            <person name="Ghim S.-Y."/>
            <person name="Glaser P."/>
            <person name="Goffeau A."/>
            <person name="Golightly E.J."/>
            <person name="Grandi G."/>
            <person name="Guiseppi G."/>
            <person name="Guy B.J."/>
            <person name="Haga K."/>
            <person name="Haiech J."/>
            <person name="Harwood C.R."/>
            <person name="Henaut A."/>
            <person name="Hilbert H."/>
            <person name="Holsappel S."/>
            <person name="Hosono S."/>
            <person name="Hullo M.-F."/>
            <person name="Itaya M."/>
            <person name="Jones L.-M."/>
            <person name="Joris B."/>
            <person name="Karamata D."/>
            <person name="Kasahara Y."/>
            <person name="Klaerr-Blanchard M."/>
            <person name="Klein C."/>
            <person name="Kobayashi Y."/>
            <person name="Koetter P."/>
            <person name="Koningstein G."/>
            <person name="Krogh S."/>
            <person name="Kumano M."/>
            <person name="Kurita K."/>
            <person name="Lapidus A."/>
            <person name="Lardinois S."/>
            <person name="Lauber J."/>
            <person name="Lazarevic V."/>
            <person name="Lee S.-M."/>
            <person name="Levine A."/>
            <person name="Liu H."/>
            <person name="Masuda S."/>
            <person name="Mauel C."/>
            <person name="Medigue C."/>
            <person name="Medina N."/>
            <person name="Mellado R.P."/>
            <person name="Mizuno M."/>
            <person name="Moestl D."/>
            <person name="Nakai S."/>
            <person name="Noback M."/>
            <person name="Noone D."/>
            <person name="O'Reilly M."/>
            <person name="Ogawa K."/>
            <person name="Ogiwara A."/>
            <person name="Oudega B."/>
            <person name="Park S.-H."/>
            <person name="Parro V."/>
            <person name="Pohl T.M."/>
            <person name="Portetelle D."/>
            <person name="Porwollik S."/>
            <person name="Prescott A.M."/>
            <person name="Presecan E."/>
            <person name="Pujic P."/>
            <person name="Purnelle B."/>
            <person name="Rapoport G."/>
            <person name="Rey M."/>
            <person name="Reynolds S."/>
            <person name="Rieger M."/>
            <person name="Rivolta C."/>
            <person name="Rocha E."/>
            <person name="Roche B."/>
            <person name="Rose M."/>
            <person name="Sadaie Y."/>
            <person name="Sato T."/>
            <person name="Scanlan E."/>
            <person name="Schleich S."/>
            <person name="Schroeter R."/>
            <person name="Scoffone F."/>
            <person name="Sekiguchi J."/>
            <person name="Sekowska A."/>
            <person name="Seror S.J."/>
            <person name="Serror P."/>
            <person name="Shin B.-S."/>
            <person name="Soldo B."/>
            <person name="Sorokin A."/>
            <person name="Tacconi E."/>
            <person name="Takagi T."/>
            <person name="Takahashi H."/>
            <person name="Takemaru K."/>
            <person name="Takeuchi M."/>
            <person name="Tamakoshi A."/>
            <person name="Tanaka T."/>
            <person name="Terpstra P."/>
            <person name="Tognoni A."/>
            <person name="Tosato V."/>
            <person name="Uchiyama S."/>
            <person name="Vandenbol M."/>
            <person name="Vannier F."/>
            <person name="Vassarotti A."/>
            <person name="Viari A."/>
            <person name="Wambutt R."/>
            <person name="Wedler E."/>
            <person name="Wedler H."/>
            <person name="Weitzenegger T."/>
            <person name="Winters P."/>
            <person name="Wipat A."/>
            <person name="Yamamoto H."/>
            <person name="Yamane K."/>
            <person name="Yasumoto K."/>
            <person name="Yata K."/>
            <person name="Yoshida K."/>
            <person name="Yoshikawa H.-F."/>
            <person name="Zumstein E."/>
            <person name="Yoshikawa H."/>
            <person name="Danchin A."/>
        </authorList>
    </citation>
    <scope>NUCLEOTIDE SEQUENCE [LARGE SCALE GENOMIC DNA]</scope>
    <source>
        <strain>168</strain>
    </source>
</reference>
<reference key="3">
    <citation type="journal article" date="2011" name="PLoS Biol.">
        <title>Structural basis of response regulator dephosphorylation by Rap phosphatases.</title>
        <authorList>
            <person name="Parashar V."/>
            <person name="Mirouze N."/>
            <person name="Dubnau D.A."/>
            <person name="Neiditch M.B."/>
        </authorList>
    </citation>
    <scope>FUNCTION</scope>
    <scope>CATALYTIC ACTIVITY</scope>
    <scope>SUBUNIT</scope>
</reference>
<reference evidence="6" key="4">
    <citation type="journal article" date="2013" name="PLoS Biol.">
        <title>Conformational change-induced repeat domain expansion regulates Rap phosphatase quorum-sensing signal receptors.</title>
        <authorList>
            <person name="Parashar V."/>
            <person name="Jeffrey P.D."/>
            <person name="Neiditch M.B."/>
        </authorList>
    </citation>
    <scope>X-RAY CRYSTALLOGRAPHY (2.16 ANGSTROMS) IN COMPLEX WITH CSF</scope>
    <scope>FUNCTION</scope>
    <scope>CATALYTIC ACTIVITY</scope>
    <scope>ACTIVITY REGULATION</scope>
    <scope>SUBUNIT</scope>
    <scope>DOMAIN</scope>
    <scope>MUTAGENESIS OF GLU-87; ARG-105; GLU-147; TYR-150; TYR-161; ASP-192; ASN-225; PHE-250 AND LYS-300</scope>
</reference>
<keyword id="KW-0002">3D-structure</keyword>
<keyword id="KW-0021">Allosteric enzyme</keyword>
<keyword id="KW-0963">Cytoplasm</keyword>
<keyword id="KW-0378">Hydrolase</keyword>
<keyword id="KW-0904">Protein phosphatase</keyword>
<keyword id="KW-1185">Reference proteome</keyword>
<keyword id="KW-0677">Repeat</keyword>
<keyword id="KW-0749">Sporulation</keyword>
<keyword id="KW-0802">TPR repeat</keyword>
<protein>
    <recommendedName>
        <fullName evidence="4">Response regulator aspartate phosphatase J</fullName>
        <ecNumber evidence="2 3">3.1.3.-</ecNumber>
    </recommendedName>
</protein>
<name>RAPJ_BACSU</name>
<accession>O34327</accession>